<gene>
    <name evidence="1" type="primary">ccmA</name>
    <name type="ordered locus">Nham_0409</name>
</gene>
<comment type="function">
    <text evidence="1">Part of the ABC transporter complex CcmAB involved in the biogenesis of c-type cytochromes; once thought to export heme, this seems not to be the case, but its exact role is uncertain. Responsible for energy coupling to the transport system.</text>
</comment>
<comment type="catalytic activity">
    <reaction evidence="1">
        <text>heme b(in) + ATP + H2O = heme b(out) + ADP + phosphate + H(+)</text>
        <dbReference type="Rhea" id="RHEA:19261"/>
        <dbReference type="ChEBI" id="CHEBI:15377"/>
        <dbReference type="ChEBI" id="CHEBI:15378"/>
        <dbReference type="ChEBI" id="CHEBI:30616"/>
        <dbReference type="ChEBI" id="CHEBI:43474"/>
        <dbReference type="ChEBI" id="CHEBI:60344"/>
        <dbReference type="ChEBI" id="CHEBI:456216"/>
        <dbReference type="EC" id="7.6.2.5"/>
    </reaction>
</comment>
<comment type="subunit">
    <text evidence="1">The complex is composed of two ATP-binding proteins (CcmA) and two transmembrane proteins (CcmB).</text>
</comment>
<comment type="subcellular location">
    <subcellularLocation>
        <location evidence="1">Cell inner membrane</location>
        <topology evidence="1">Peripheral membrane protein</topology>
    </subcellularLocation>
</comment>
<comment type="similarity">
    <text evidence="1">Belongs to the ABC transporter superfamily. CcmA exporter (TC 3.A.1.107) family.</text>
</comment>
<organism>
    <name type="scientific">Nitrobacter hamburgensis (strain DSM 10229 / NCIMB 13809 / X14)</name>
    <dbReference type="NCBI Taxonomy" id="323097"/>
    <lineage>
        <taxon>Bacteria</taxon>
        <taxon>Pseudomonadati</taxon>
        <taxon>Pseudomonadota</taxon>
        <taxon>Alphaproteobacteria</taxon>
        <taxon>Hyphomicrobiales</taxon>
        <taxon>Nitrobacteraceae</taxon>
        <taxon>Nitrobacter</taxon>
    </lineage>
</organism>
<protein>
    <recommendedName>
        <fullName evidence="1">Cytochrome c biogenesis ATP-binding export protein CcmA</fullName>
        <ecNumber evidence="1">7.6.2.5</ecNumber>
    </recommendedName>
    <alternativeName>
        <fullName evidence="1">Heme exporter protein A</fullName>
    </alternativeName>
</protein>
<name>CCMA_NITHX</name>
<reference key="1">
    <citation type="submission" date="2006-03" db="EMBL/GenBank/DDBJ databases">
        <title>Complete sequence of chromosome of Nitrobacter hamburgensis X14.</title>
        <authorList>
            <consortium name="US DOE Joint Genome Institute"/>
            <person name="Copeland A."/>
            <person name="Lucas S."/>
            <person name="Lapidus A."/>
            <person name="Barry K."/>
            <person name="Detter J.C."/>
            <person name="Glavina del Rio T."/>
            <person name="Hammon N."/>
            <person name="Israni S."/>
            <person name="Dalin E."/>
            <person name="Tice H."/>
            <person name="Pitluck S."/>
            <person name="Chain P."/>
            <person name="Malfatti S."/>
            <person name="Shin M."/>
            <person name="Vergez L."/>
            <person name="Schmutz J."/>
            <person name="Larimer F."/>
            <person name="Land M."/>
            <person name="Hauser L."/>
            <person name="Kyrpides N."/>
            <person name="Ivanova N."/>
            <person name="Ward B."/>
            <person name="Arp D."/>
            <person name="Klotz M."/>
            <person name="Stein L."/>
            <person name="O'Mullan G."/>
            <person name="Starkenburg S."/>
            <person name="Sayavedra L."/>
            <person name="Poret-Peterson A.T."/>
            <person name="Gentry M.E."/>
            <person name="Bruce D."/>
            <person name="Richardson P."/>
        </authorList>
    </citation>
    <scope>NUCLEOTIDE SEQUENCE [LARGE SCALE GENOMIC DNA]</scope>
    <source>
        <strain>DSM 10229 / NCIMB 13809 / X14</strain>
    </source>
</reference>
<proteinExistence type="inferred from homology"/>
<accession>Q1QR47</accession>
<dbReference type="EC" id="7.6.2.5" evidence="1"/>
<dbReference type="EMBL" id="CP000319">
    <property type="protein sequence ID" value="ABE61300.1"/>
    <property type="molecule type" value="Genomic_DNA"/>
</dbReference>
<dbReference type="RefSeq" id="WP_011509004.1">
    <property type="nucleotide sequence ID" value="NC_007964.1"/>
</dbReference>
<dbReference type="SMR" id="Q1QR47"/>
<dbReference type="STRING" id="323097.Nham_0409"/>
<dbReference type="KEGG" id="nha:Nham_0409"/>
<dbReference type="eggNOG" id="COG4133">
    <property type="taxonomic scope" value="Bacteria"/>
</dbReference>
<dbReference type="HOGENOM" id="CLU_000604_1_2_5"/>
<dbReference type="OrthoDB" id="9800654at2"/>
<dbReference type="Proteomes" id="UP000001953">
    <property type="component" value="Chromosome"/>
</dbReference>
<dbReference type="GO" id="GO:0005886">
    <property type="term" value="C:plasma membrane"/>
    <property type="evidence" value="ECO:0007669"/>
    <property type="project" value="UniProtKB-SubCell"/>
</dbReference>
<dbReference type="GO" id="GO:0015439">
    <property type="term" value="F:ABC-type heme transporter activity"/>
    <property type="evidence" value="ECO:0007669"/>
    <property type="project" value="UniProtKB-EC"/>
</dbReference>
<dbReference type="GO" id="GO:0005524">
    <property type="term" value="F:ATP binding"/>
    <property type="evidence" value="ECO:0007669"/>
    <property type="project" value="UniProtKB-KW"/>
</dbReference>
<dbReference type="GO" id="GO:0016887">
    <property type="term" value="F:ATP hydrolysis activity"/>
    <property type="evidence" value="ECO:0007669"/>
    <property type="project" value="InterPro"/>
</dbReference>
<dbReference type="GO" id="GO:0017004">
    <property type="term" value="P:cytochrome complex assembly"/>
    <property type="evidence" value="ECO:0007669"/>
    <property type="project" value="UniProtKB-KW"/>
</dbReference>
<dbReference type="Gene3D" id="3.40.50.300">
    <property type="entry name" value="P-loop containing nucleotide triphosphate hydrolases"/>
    <property type="match status" value="1"/>
</dbReference>
<dbReference type="InterPro" id="IPR003593">
    <property type="entry name" value="AAA+_ATPase"/>
</dbReference>
<dbReference type="InterPro" id="IPR003439">
    <property type="entry name" value="ABC_transporter-like_ATP-bd"/>
</dbReference>
<dbReference type="InterPro" id="IPR017871">
    <property type="entry name" value="ABC_transporter-like_CS"/>
</dbReference>
<dbReference type="InterPro" id="IPR005895">
    <property type="entry name" value="ABC_transptr_haem_export_CcmA"/>
</dbReference>
<dbReference type="InterPro" id="IPR027417">
    <property type="entry name" value="P-loop_NTPase"/>
</dbReference>
<dbReference type="NCBIfam" id="TIGR01189">
    <property type="entry name" value="ccmA"/>
    <property type="match status" value="1"/>
</dbReference>
<dbReference type="PANTHER" id="PTHR43499">
    <property type="entry name" value="ABC TRANSPORTER I FAMILY MEMBER 1"/>
    <property type="match status" value="1"/>
</dbReference>
<dbReference type="PANTHER" id="PTHR43499:SF1">
    <property type="entry name" value="ABC TRANSPORTER I FAMILY MEMBER 1"/>
    <property type="match status" value="1"/>
</dbReference>
<dbReference type="Pfam" id="PF00005">
    <property type="entry name" value="ABC_tran"/>
    <property type="match status" value="1"/>
</dbReference>
<dbReference type="SMART" id="SM00382">
    <property type="entry name" value="AAA"/>
    <property type="match status" value="1"/>
</dbReference>
<dbReference type="SUPFAM" id="SSF52540">
    <property type="entry name" value="P-loop containing nucleoside triphosphate hydrolases"/>
    <property type="match status" value="1"/>
</dbReference>
<dbReference type="PROSITE" id="PS00211">
    <property type="entry name" value="ABC_TRANSPORTER_1"/>
    <property type="match status" value="1"/>
</dbReference>
<dbReference type="PROSITE" id="PS50893">
    <property type="entry name" value="ABC_TRANSPORTER_2"/>
    <property type="match status" value="1"/>
</dbReference>
<dbReference type="PROSITE" id="PS51243">
    <property type="entry name" value="CCMA"/>
    <property type="match status" value="1"/>
</dbReference>
<sequence>MKLSGHGLRCVRGGREVFSGLDVAAESGRAVAITGPNGAGKTSLLRLLAGLLALEGGSIGLEGGDPELTLPEQAHYLGHRDALKPALSVSENLSFWRGFLGGASRASGPDAAQALAAVGLDHVAHLPAAYLSAGQRRRLSIARLLAVKRPVWLLDEPTSALDVAGQSAFAAIMTGHLAGGGIILAATHTPLGIAARELRIGGTT</sequence>
<evidence type="ECO:0000255" key="1">
    <source>
        <dbReference type="HAMAP-Rule" id="MF_01707"/>
    </source>
</evidence>
<feature type="chain" id="PRO_0000271934" description="Cytochrome c biogenesis ATP-binding export protein CcmA">
    <location>
        <begin position="1"/>
        <end position="204"/>
    </location>
</feature>
<feature type="domain" description="ABC transporter" evidence="1">
    <location>
        <begin position="3"/>
        <end position="204"/>
    </location>
</feature>
<feature type="binding site" evidence="1">
    <location>
        <begin position="35"/>
        <end position="42"/>
    </location>
    <ligand>
        <name>ATP</name>
        <dbReference type="ChEBI" id="CHEBI:30616"/>
    </ligand>
</feature>
<keyword id="KW-0067">ATP-binding</keyword>
<keyword id="KW-0997">Cell inner membrane</keyword>
<keyword id="KW-1003">Cell membrane</keyword>
<keyword id="KW-0201">Cytochrome c-type biogenesis</keyword>
<keyword id="KW-0472">Membrane</keyword>
<keyword id="KW-0547">Nucleotide-binding</keyword>
<keyword id="KW-1185">Reference proteome</keyword>
<keyword id="KW-1278">Translocase</keyword>
<keyword id="KW-0813">Transport</keyword>